<comment type="function">
    <text evidence="6">Hydrolyzes fatty acids from S-acylated cysteine residues in proteins. Has depalmitoylating activity towards DLG4/PSD95.</text>
</comment>
<comment type="catalytic activity">
    <reaction evidence="6">
        <text>S-hexadecanoyl-L-cysteinyl-[protein] + H2O = L-cysteinyl-[protein] + hexadecanoate + H(+)</text>
        <dbReference type="Rhea" id="RHEA:19233"/>
        <dbReference type="Rhea" id="RHEA-COMP:10131"/>
        <dbReference type="Rhea" id="RHEA-COMP:11032"/>
        <dbReference type="ChEBI" id="CHEBI:7896"/>
        <dbReference type="ChEBI" id="CHEBI:15377"/>
        <dbReference type="ChEBI" id="CHEBI:15378"/>
        <dbReference type="ChEBI" id="CHEBI:29950"/>
        <dbReference type="ChEBI" id="CHEBI:74151"/>
        <dbReference type="EC" id="3.1.2.22"/>
    </reaction>
</comment>
<comment type="subcellular location">
    <subcellularLocation>
        <location evidence="1">Recycling endosome membrane</location>
        <topology evidence="1">Lipid-anchor</topology>
        <orientation evidence="1">Cytoplasmic side</orientation>
    </subcellularLocation>
    <subcellularLocation>
        <location evidence="1">Cell projection</location>
        <location evidence="1">Dendritic spine</location>
    </subcellularLocation>
    <subcellularLocation>
        <location evidence="1">Postsynaptic density membrane</location>
    </subcellularLocation>
</comment>
<comment type="PTM">
    <text evidence="3">Palmitoylated on cysteine residues located in a cysteine cluster at the N-terminus which promotes membrane localization. Palmitoylation is required for post-synaptic localization and for depalmitoylating activity towards DLG4/PSD95.</text>
</comment>
<comment type="similarity">
    <text evidence="7">Belongs to the AB hydrolase superfamily. ABHD17 family.</text>
</comment>
<keyword id="KW-1003">Cell membrane</keyword>
<keyword id="KW-0966">Cell projection</keyword>
<keyword id="KW-0967">Endosome</keyword>
<keyword id="KW-0378">Hydrolase</keyword>
<keyword id="KW-0449">Lipoprotein</keyword>
<keyword id="KW-0472">Membrane</keyword>
<keyword id="KW-0564">Palmitate</keyword>
<keyword id="KW-0628">Postsynaptic cell membrane</keyword>
<keyword id="KW-1185">Reference proteome</keyword>
<keyword id="KW-0770">Synapse</keyword>
<accession>Q8VCV1</accession>
<gene>
    <name evidence="8" type="primary">Abhd17c</name>
</gene>
<feature type="chain" id="PRO_0000297514" description="Alpha/beta hydrolase domain-containing protein 17C">
    <location>
        <begin position="1"/>
        <end position="320"/>
    </location>
</feature>
<feature type="region of interest" description="Disordered" evidence="5">
    <location>
        <begin position="50"/>
        <end position="75"/>
    </location>
</feature>
<feature type="compositionally biased region" description="Pro residues" evidence="5">
    <location>
        <begin position="55"/>
        <end position="65"/>
    </location>
</feature>
<feature type="active site" description="Charge relay system" evidence="4">
    <location>
        <position position="202"/>
    </location>
</feature>
<feature type="active site" description="Charge relay system" evidence="2">
    <location>
        <position position="267"/>
    </location>
</feature>
<feature type="active site" description="Charge relay system" evidence="2">
    <location>
        <position position="296"/>
    </location>
</feature>
<organism>
    <name type="scientific">Mus musculus</name>
    <name type="common">Mouse</name>
    <dbReference type="NCBI Taxonomy" id="10090"/>
    <lineage>
        <taxon>Eukaryota</taxon>
        <taxon>Metazoa</taxon>
        <taxon>Chordata</taxon>
        <taxon>Craniata</taxon>
        <taxon>Vertebrata</taxon>
        <taxon>Euteleostomi</taxon>
        <taxon>Mammalia</taxon>
        <taxon>Eutheria</taxon>
        <taxon>Euarchontoglires</taxon>
        <taxon>Glires</taxon>
        <taxon>Rodentia</taxon>
        <taxon>Myomorpha</taxon>
        <taxon>Muroidea</taxon>
        <taxon>Muridae</taxon>
        <taxon>Murinae</taxon>
        <taxon>Mus</taxon>
        <taxon>Mus</taxon>
    </lineage>
</organism>
<name>AB17C_MOUSE</name>
<protein>
    <recommendedName>
        <fullName evidence="7">Alpha/beta hydrolase domain-containing protein 17C</fullName>
        <shortName evidence="8">Abhydrolase domain-containing protein 17C</shortName>
        <ecNumber evidence="6">3.1.2.22</ecNumber>
    </recommendedName>
</protein>
<evidence type="ECO:0000250" key="1">
    <source>
        <dbReference type="UniProtKB" id="B5DFK7"/>
    </source>
</evidence>
<evidence type="ECO:0000250" key="2">
    <source>
        <dbReference type="UniProtKB" id="O75608"/>
    </source>
</evidence>
<evidence type="ECO:0000250" key="3">
    <source>
        <dbReference type="UniProtKB" id="Q7M759"/>
    </source>
</evidence>
<evidence type="ECO:0000250" key="4">
    <source>
        <dbReference type="UniProtKB" id="Q96GS6"/>
    </source>
</evidence>
<evidence type="ECO:0000256" key="5">
    <source>
        <dbReference type="SAM" id="MobiDB-lite"/>
    </source>
</evidence>
<evidence type="ECO:0000269" key="6">
    <source>
    </source>
</evidence>
<evidence type="ECO:0000305" key="7"/>
<evidence type="ECO:0000312" key="8">
    <source>
        <dbReference type="MGI" id="MGI:1917428"/>
    </source>
</evidence>
<dbReference type="EC" id="3.1.2.22" evidence="6"/>
<dbReference type="EMBL" id="BC018511">
    <property type="protein sequence ID" value="AAH18511.1"/>
    <property type="molecule type" value="mRNA"/>
</dbReference>
<dbReference type="CCDS" id="CCDS21417.2"/>
<dbReference type="RefSeq" id="NP_598483.2">
    <property type="nucleotide sequence ID" value="NM_133722.2"/>
</dbReference>
<dbReference type="SMR" id="Q8VCV1"/>
<dbReference type="BioGRID" id="213904">
    <property type="interactions" value="2"/>
</dbReference>
<dbReference type="FunCoup" id="Q8VCV1">
    <property type="interactions" value="198"/>
</dbReference>
<dbReference type="STRING" id="10090.ENSMUSP00000112988"/>
<dbReference type="ESTHER" id="mouse-Q8VCV1">
    <property type="family name" value="ABHD17-depalmitoylase"/>
</dbReference>
<dbReference type="MEROPS" id="S09.053"/>
<dbReference type="GlyGen" id="Q8VCV1">
    <property type="glycosylation" value="1 site"/>
</dbReference>
<dbReference type="iPTMnet" id="Q8VCV1"/>
<dbReference type="PhosphoSitePlus" id="Q8VCV1"/>
<dbReference type="SwissPalm" id="Q8VCV1"/>
<dbReference type="PaxDb" id="10090-ENSMUSP00000112988"/>
<dbReference type="PeptideAtlas" id="Q8VCV1"/>
<dbReference type="ProteomicsDB" id="296432"/>
<dbReference type="Pumba" id="Q8VCV1"/>
<dbReference type="Antibodypedia" id="63038">
    <property type="antibodies" value="56 antibodies from 14 providers"/>
</dbReference>
<dbReference type="DNASU" id="70178"/>
<dbReference type="Ensembl" id="ENSMUST00000117085.2">
    <property type="protein sequence ID" value="ENSMUSP00000112988.2"/>
    <property type="gene ID" value="ENSMUSG00000038459.11"/>
</dbReference>
<dbReference type="GeneID" id="70178"/>
<dbReference type="KEGG" id="mmu:70178"/>
<dbReference type="UCSC" id="uc009ied.2">
    <property type="organism name" value="mouse"/>
</dbReference>
<dbReference type="AGR" id="MGI:1917428"/>
<dbReference type="CTD" id="58489"/>
<dbReference type="MGI" id="MGI:1917428">
    <property type="gene designation" value="Abhd17c"/>
</dbReference>
<dbReference type="VEuPathDB" id="HostDB:ENSMUSG00000038459"/>
<dbReference type="eggNOG" id="KOG1552">
    <property type="taxonomic scope" value="Eukaryota"/>
</dbReference>
<dbReference type="GeneTree" id="ENSGT00940000159424"/>
<dbReference type="HOGENOM" id="CLU_029375_5_4_1"/>
<dbReference type="InParanoid" id="Q8VCV1"/>
<dbReference type="OMA" id="TGQASEC"/>
<dbReference type="OrthoDB" id="446723at2759"/>
<dbReference type="PhylomeDB" id="Q8VCV1"/>
<dbReference type="TreeFam" id="TF314365"/>
<dbReference type="Reactome" id="R-MMU-9648002">
    <property type="pathway name" value="RAS processing"/>
</dbReference>
<dbReference type="BioGRID-ORCS" id="70178">
    <property type="hits" value="4 hits in 77 CRISPR screens"/>
</dbReference>
<dbReference type="ChiTaRS" id="Abhd17c">
    <property type="organism name" value="mouse"/>
</dbReference>
<dbReference type="PRO" id="PR:Q8VCV1"/>
<dbReference type="Proteomes" id="UP000000589">
    <property type="component" value="Chromosome 7"/>
</dbReference>
<dbReference type="RNAct" id="Q8VCV1">
    <property type="molecule type" value="protein"/>
</dbReference>
<dbReference type="Bgee" id="ENSMUSG00000038459">
    <property type="expression patterns" value="Expressed in epithelium of small intestine and 262 other cell types or tissues"/>
</dbReference>
<dbReference type="GO" id="GO:0043197">
    <property type="term" value="C:dendritic spine"/>
    <property type="evidence" value="ECO:0007669"/>
    <property type="project" value="UniProtKB-SubCell"/>
</dbReference>
<dbReference type="GO" id="GO:0098978">
    <property type="term" value="C:glutamatergic synapse"/>
    <property type="evidence" value="ECO:0007669"/>
    <property type="project" value="Ensembl"/>
</dbReference>
<dbReference type="GO" id="GO:0014069">
    <property type="term" value="C:postsynaptic density"/>
    <property type="evidence" value="ECO:0000314"/>
    <property type="project" value="UniProtKB"/>
</dbReference>
<dbReference type="GO" id="GO:0098839">
    <property type="term" value="C:postsynaptic density membrane"/>
    <property type="evidence" value="ECO:0007669"/>
    <property type="project" value="UniProtKB-SubCell"/>
</dbReference>
<dbReference type="GO" id="GO:0055038">
    <property type="term" value="C:recycling endosome membrane"/>
    <property type="evidence" value="ECO:0007669"/>
    <property type="project" value="UniProtKB-SubCell"/>
</dbReference>
<dbReference type="GO" id="GO:0008474">
    <property type="term" value="F:palmitoyl-(protein) hydrolase activity"/>
    <property type="evidence" value="ECO:0000314"/>
    <property type="project" value="UniProtKB"/>
</dbReference>
<dbReference type="GO" id="GO:1902817">
    <property type="term" value="P:negative regulation of protein localization to microtubule"/>
    <property type="evidence" value="ECO:0000315"/>
    <property type="project" value="UniProtKB"/>
</dbReference>
<dbReference type="GO" id="GO:1905668">
    <property type="term" value="P:positive regulation of protein localization to endosome"/>
    <property type="evidence" value="ECO:0000315"/>
    <property type="project" value="UniProtKB"/>
</dbReference>
<dbReference type="GO" id="GO:0002084">
    <property type="term" value="P:protein depalmitoylation"/>
    <property type="evidence" value="ECO:0000314"/>
    <property type="project" value="UniProtKB"/>
</dbReference>
<dbReference type="GO" id="GO:0099175">
    <property type="term" value="P:regulation of postsynapse organization"/>
    <property type="evidence" value="ECO:0007669"/>
    <property type="project" value="Ensembl"/>
</dbReference>
<dbReference type="FunFam" id="3.40.50.1820:FF:000008">
    <property type="entry name" value="Alpha/beta hydrolase domain-containing protein 17B"/>
    <property type="match status" value="1"/>
</dbReference>
<dbReference type="Gene3D" id="3.40.50.1820">
    <property type="entry name" value="alpha/beta hydrolase"/>
    <property type="match status" value="1"/>
</dbReference>
<dbReference type="InterPro" id="IPR029058">
    <property type="entry name" value="AB_hydrolase_fold"/>
</dbReference>
<dbReference type="InterPro" id="IPR022742">
    <property type="entry name" value="Hydrolase_4"/>
</dbReference>
<dbReference type="PANTHER" id="PTHR12277">
    <property type="entry name" value="ALPHA/BETA HYDROLASE DOMAIN-CONTAINING PROTEIN"/>
    <property type="match status" value="1"/>
</dbReference>
<dbReference type="PANTHER" id="PTHR12277:SF55">
    <property type="entry name" value="ALPHA_BETA HYDROLASE DOMAIN-CONTAINING PROTEIN 17C"/>
    <property type="match status" value="1"/>
</dbReference>
<dbReference type="Pfam" id="PF12146">
    <property type="entry name" value="Hydrolase_4"/>
    <property type="match status" value="1"/>
</dbReference>
<dbReference type="SUPFAM" id="SSF53474">
    <property type="entry name" value="alpha/beta-Hydrolases"/>
    <property type="match status" value="1"/>
</dbReference>
<proteinExistence type="evidence at protein level"/>
<reference key="1">
    <citation type="journal article" date="2004" name="Genome Res.">
        <title>The status, quality, and expansion of the NIH full-length cDNA project: the Mammalian Gene Collection (MGC).</title>
        <authorList>
            <consortium name="The MGC Project Team"/>
        </authorList>
    </citation>
    <scope>NUCLEOTIDE SEQUENCE [LARGE SCALE MRNA]</scope>
    <source>
        <tissue>Mammary tumor</tissue>
    </source>
</reference>
<reference key="2">
    <citation type="journal article" date="2010" name="Cell">
        <title>A tissue-specific atlas of mouse protein phosphorylation and expression.</title>
        <authorList>
            <person name="Huttlin E.L."/>
            <person name="Jedrychowski M.P."/>
            <person name="Elias J.E."/>
            <person name="Goswami T."/>
            <person name="Rad R."/>
            <person name="Beausoleil S.A."/>
            <person name="Villen J."/>
            <person name="Haas W."/>
            <person name="Sowa M.E."/>
            <person name="Gygi S.P."/>
        </authorList>
    </citation>
    <scope>IDENTIFICATION BY MASS SPECTROMETRY [LARGE SCALE ANALYSIS]</scope>
    <source>
        <tissue>Brain</tissue>
        <tissue>Lung</tissue>
    </source>
</reference>
<reference key="3">
    <citation type="journal article" date="2016" name="J. Neurosci.">
        <title>Identification of PSD-95 Depalmitoylating Enzymes.</title>
        <authorList>
            <person name="Yokoi N."/>
            <person name="Fukata Y."/>
            <person name="Sekiya A."/>
            <person name="Murakami T."/>
            <person name="Kobayashi K."/>
            <person name="Fukata M."/>
        </authorList>
    </citation>
    <scope>FUNCTION</scope>
    <scope>CATALYTIC ACTIVITY</scope>
</reference>
<sequence length="320" mass="35098">MPEPGPRMNGFSLGELCWLFCCPPCPSRIAAKLAFLPPEPTYTVLAPEQRAPAPAATPAPAPAAQPAPAEEGAGPGACSLHLSERADWQYSQRELDAVEVFFSRTARDNRLGCMFVRCAPSSRYTLLFSHGNAVDLGQMCSFYIGLGSRINCNIFSYDYSGYGVSSGKPSEKNLYADIDAAWQALRTRYGVSPENIILYGQSIGTVPTVDLASRYECAAVILHSPLMSGLRVAFPDTRKTYCFDAFPSIDKISKVTSPVLVIHGTEDEVIDFSHGLAMYERCPRAVEPLWVEGAGHNDIELYAQYLERLKQFISHELPNS</sequence>